<feature type="initiator methionine" description="Removed" evidence="3 4">
    <location>
        <position position="1"/>
    </location>
</feature>
<feature type="chain" id="PRO_0000158070" description="D-dopachrome decarboxylase">
    <location>
        <begin position="2"/>
        <end position="118"/>
    </location>
</feature>
<feature type="modified residue" description="N-acetylproline" evidence="1">
    <location>
        <position position="2"/>
    </location>
</feature>
<feature type="modified residue" description="N6-acetyllysine" evidence="1">
    <location>
        <position position="33"/>
    </location>
</feature>
<feature type="splice variant" id="VSP_056953" description="In isoform 2." evidence="8">
    <original>ILIRFFPLESWQIGKIGTVMTFL</original>
    <variation>QVPGEVHGRLTE</variation>
    <location>
        <begin position="96"/>
        <end position="118"/>
    </location>
</feature>
<feature type="mutagenesis site" description="Loss of enzyme activity." evidence="7">
    <original>P</original>
    <variation>A</variation>
    <location>
        <position position="2"/>
    </location>
</feature>
<feature type="sequence conflict" description="In Ref. 11; AA sequence." evidence="9" ref="11">
    <original>F</original>
    <variation>G</variation>
    <location>
        <position position="3"/>
    </location>
</feature>
<feature type="strand" evidence="13">
    <location>
        <begin position="2"/>
        <end position="10"/>
    </location>
</feature>
<feature type="helix" evidence="13">
    <location>
        <begin position="12"/>
        <end position="14"/>
    </location>
</feature>
<feature type="helix" evidence="13">
    <location>
        <begin position="19"/>
        <end position="31"/>
    </location>
</feature>
<feature type="helix" evidence="13">
    <location>
        <begin position="35"/>
        <end position="37"/>
    </location>
</feature>
<feature type="strand" evidence="13">
    <location>
        <begin position="38"/>
        <end position="43"/>
    </location>
</feature>
<feature type="strand" evidence="12">
    <location>
        <begin position="47"/>
        <end position="50"/>
    </location>
</feature>
<feature type="strand" evidence="13">
    <location>
        <begin position="58"/>
        <end position="70"/>
    </location>
</feature>
<feature type="helix" evidence="13">
    <location>
        <begin position="71"/>
        <end position="89"/>
    </location>
</feature>
<feature type="helix" evidence="13">
    <location>
        <begin position="93"/>
        <end position="95"/>
    </location>
</feature>
<feature type="strand" evidence="13">
    <location>
        <begin position="96"/>
        <end position="103"/>
    </location>
</feature>
<feature type="helix" evidence="13">
    <location>
        <begin position="105"/>
        <end position="107"/>
    </location>
</feature>
<feature type="strand" evidence="12">
    <location>
        <begin position="108"/>
        <end position="110"/>
    </location>
</feature>
<feature type="helix" evidence="13">
    <location>
        <begin position="115"/>
        <end position="117"/>
    </location>
</feature>
<organism>
    <name type="scientific">Homo sapiens</name>
    <name type="common">Human</name>
    <dbReference type="NCBI Taxonomy" id="9606"/>
    <lineage>
        <taxon>Eukaryota</taxon>
        <taxon>Metazoa</taxon>
        <taxon>Chordata</taxon>
        <taxon>Craniata</taxon>
        <taxon>Vertebrata</taxon>
        <taxon>Euteleostomi</taxon>
        <taxon>Mammalia</taxon>
        <taxon>Eutheria</taxon>
        <taxon>Euarchontoglires</taxon>
        <taxon>Primates</taxon>
        <taxon>Haplorrhini</taxon>
        <taxon>Catarrhini</taxon>
        <taxon>Hominidae</taxon>
        <taxon>Homo</taxon>
    </lineage>
</organism>
<reference key="1">
    <citation type="submission" date="1996-02" db="EMBL/GenBank/DDBJ databases">
        <authorList>
            <person name="Thelin S."/>
            <person name="Panagopoulos I."/>
            <person name="Lassen C."/>
            <person name="Rosengren E."/>
            <person name="Aman P."/>
            <person name="Rorsman H."/>
        </authorList>
    </citation>
    <scope>NUCLEOTIDE SEQUENCE [MRNA] (ISOFORM 1)</scope>
    <source>
        <tissue>Placenta</tissue>
    </source>
</reference>
<reference key="2">
    <citation type="journal article" date="1998" name="Biochem. Biophys. Res. Commun.">
        <title>Molecular cloning of human D-dopachrome tautomerase cDNA: N-terminal proline is essential for enzyme activation.</title>
        <authorList>
            <person name="Nishihira J."/>
            <person name="Fujinaga M."/>
            <person name="Kuriyama T."/>
            <person name="Suzuki M."/>
            <person name="Sugimoto H."/>
            <person name="Nakagawa A."/>
            <person name="Tanaka I."/>
            <person name="Sakai M."/>
        </authorList>
    </citation>
    <scope>NUCLEOTIDE SEQUENCE [MRNA] (ISOFORM 1)</scope>
    <scope>FUNCTION</scope>
    <scope>CATALYTIC ACTIVITY</scope>
    <scope>BIOPHYSICOCHEMICAL PROPERTIES</scope>
    <scope>MUTAGENESIS OF PRO-2</scope>
    <scope>TISSUE SPECIFICITY</scope>
</reference>
<reference key="3">
    <citation type="submission" date="1998-05" db="EMBL/GenBank/DDBJ databases">
        <authorList>
            <person name="Rorsman H."/>
        </authorList>
    </citation>
    <scope>NUCLEOTIDE SEQUENCE [GENOMIC DNA]</scope>
</reference>
<reference key="4">
    <citation type="journal article" date="1998" name="Mamm. Genome">
        <title>Conserved gene structure and genomic linkage for D-dopachrome tautomerase (DDT) and MIF.</title>
        <authorList>
            <person name="Esumi N."/>
            <person name="Budarf M."/>
            <person name="Ciccarelli L."/>
            <person name="Sellinger B."/>
            <person name="Kozak C.A."/>
            <person name="Wistow G."/>
        </authorList>
    </citation>
    <scope>NUCLEOTIDE SEQUENCE [GENOMIC DNA]</scope>
</reference>
<reference key="5">
    <citation type="submission" date="1998-04" db="EMBL/GenBank/DDBJ databases">
        <authorList>
            <person name="Board P.G."/>
            <person name="Coggan M.A."/>
        </authorList>
    </citation>
    <scope>NUCLEOTIDE SEQUENCE [GENOMIC DNA]</scope>
</reference>
<reference key="6">
    <citation type="journal article" date="2004" name="Genome Biol.">
        <title>A genome annotation-driven approach to cloning the human ORFeome.</title>
        <authorList>
            <person name="Collins J.E."/>
            <person name="Wright C.L."/>
            <person name="Edwards C.A."/>
            <person name="Davis M.P."/>
            <person name="Grinham J.A."/>
            <person name="Cole C.G."/>
            <person name="Goward M.E."/>
            <person name="Aguado B."/>
            <person name="Mallya M."/>
            <person name="Mokrab Y."/>
            <person name="Huckle E.J."/>
            <person name="Beare D.M."/>
            <person name="Dunham I."/>
        </authorList>
    </citation>
    <scope>NUCLEOTIDE SEQUENCE [LARGE SCALE MRNA] (ISOFORM 1)</scope>
</reference>
<reference key="7">
    <citation type="journal article" date="2004" name="Nat. Genet.">
        <title>Complete sequencing and characterization of 21,243 full-length human cDNAs.</title>
        <authorList>
            <person name="Ota T."/>
            <person name="Suzuki Y."/>
            <person name="Nishikawa T."/>
            <person name="Otsuki T."/>
            <person name="Sugiyama T."/>
            <person name="Irie R."/>
            <person name="Wakamatsu A."/>
            <person name="Hayashi K."/>
            <person name="Sato H."/>
            <person name="Nagai K."/>
            <person name="Kimura K."/>
            <person name="Makita H."/>
            <person name="Sekine M."/>
            <person name="Obayashi M."/>
            <person name="Nishi T."/>
            <person name="Shibahara T."/>
            <person name="Tanaka T."/>
            <person name="Ishii S."/>
            <person name="Yamamoto J."/>
            <person name="Saito K."/>
            <person name="Kawai Y."/>
            <person name="Isono Y."/>
            <person name="Nakamura Y."/>
            <person name="Nagahari K."/>
            <person name="Murakami K."/>
            <person name="Yasuda T."/>
            <person name="Iwayanagi T."/>
            <person name="Wagatsuma M."/>
            <person name="Shiratori A."/>
            <person name="Sudo H."/>
            <person name="Hosoiri T."/>
            <person name="Kaku Y."/>
            <person name="Kodaira H."/>
            <person name="Kondo H."/>
            <person name="Sugawara M."/>
            <person name="Takahashi M."/>
            <person name="Kanda K."/>
            <person name="Yokoi T."/>
            <person name="Furuya T."/>
            <person name="Kikkawa E."/>
            <person name="Omura Y."/>
            <person name="Abe K."/>
            <person name="Kamihara K."/>
            <person name="Katsuta N."/>
            <person name="Sato K."/>
            <person name="Tanikawa M."/>
            <person name="Yamazaki M."/>
            <person name="Ninomiya K."/>
            <person name="Ishibashi T."/>
            <person name="Yamashita H."/>
            <person name="Murakawa K."/>
            <person name="Fujimori K."/>
            <person name="Tanai H."/>
            <person name="Kimata M."/>
            <person name="Watanabe M."/>
            <person name="Hiraoka S."/>
            <person name="Chiba Y."/>
            <person name="Ishida S."/>
            <person name="Ono Y."/>
            <person name="Takiguchi S."/>
            <person name="Watanabe S."/>
            <person name="Yosida M."/>
            <person name="Hotuta T."/>
            <person name="Kusano J."/>
            <person name="Kanehori K."/>
            <person name="Takahashi-Fujii A."/>
            <person name="Hara H."/>
            <person name="Tanase T.-O."/>
            <person name="Nomura Y."/>
            <person name="Togiya S."/>
            <person name="Komai F."/>
            <person name="Hara R."/>
            <person name="Takeuchi K."/>
            <person name="Arita M."/>
            <person name="Imose N."/>
            <person name="Musashino K."/>
            <person name="Yuuki H."/>
            <person name="Oshima A."/>
            <person name="Sasaki N."/>
            <person name="Aotsuka S."/>
            <person name="Yoshikawa Y."/>
            <person name="Matsunawa H."/>
            <person name="Ichihara T."/>
            <person name="Shiohata N."/>
            <person name="Sano S."/>
            <person name="Moriya S."/>
            <person name="Momiyama H."/>
            <person name="Satoh N."/>
            <person name="Takami S."/>
            <person name="Terashima Y."/>
            <person name="Suzuki O."/>
            <person name="Nakagawa S."/>
            <person name="Senoh A."/>
            <person name="Mizoguchi H."/>
            <person name="Goto Y."/>
            <person name="Shimizu F."/>
            <person name="Wakebe H."/>
            <person name="Hishigaki H."/>
            <person name="Watanabe T."/>
            <person name="Sugiyama A."/>
            <person name="Takemoto M."/>
            <person name="Kawakami B."/>
            <person name="Yamazaki M."/>
            <person name="Watanabe K."/>
            <person name="Kumagai A."/>
            <person name="Itakura S."/>
            <person name="Fukuzumi Y."/>
            <person name="Fujimori Y."/>
            <person name="Komiyama M."/>
            <person name="Tashiro H."/>
            <person name="Tanigami A."/>
            <person name="Fujiwara T."/>
            <person name="Ono T."/>
            <person name="Yamada K."/>
            <person name="Fujii Y."/>
            <person name="Ozaki K."/>
            <person name="Hirao M."/>
            <person name="Ohmori Y."/>
            <person name="Kawabata A."/>
            <person name="Hikiji T."/>
            <person name="Kobatake N."/>
            <person name="Inagaki H."/>
            <person name="Ikema Y."/>
            <person name="Okamoto S."/>
            <person name="Okitani R."/>
            <person name="Kawakami T."/>
            <person name="Noguchi S."/>
            <person name="Itoh T."/>
            <person name="Shigeta K."/>
            <person name="Senba T."/>
            <person name="Matsumura K."/>
            <person name="Nakajima Y."/>
            <person name="Mizuno T."/>
            <person name="Morinaga M."/>
            <person name="Sasaki M."/>
            <person name="Togashi T."/>
            <person name="Oyama M."/>
            <person name="Hata H."/>
            <person name="Watanabe M."/>
            <person name="Komatsu T."/>
            <person name="Mizushima-Sugano J."/>
            <person name="Satoh T."/>
            <person name="Shirai Y."/>
            <person name="Takahashi Y."/>
            <person name="Nakagawa K."/>
            <person name="Okumura K."/>
            <person name="Nagase T."/>
            <person name="Nomura N."/>
            <person name="Kikuchi H."/>
            <person name="Masuho Y."/>
            <person name="Yamashita R."/>
            <person name="Nakai K."/>
            <person name="Yada T."/>
            <person name="Nakamura Y."/>
            <person name="Ohara O."/>
            <person name="Isogai T."/>
            <person name="Sugano S."/>
        </authorList>
    </citation>
    <scope>NUCLEOTIDE SEQUENCE [LARGE SCALE MRNA] (ISOFORM 2)</scope>
    <source>
        <tissue>Kidney</tissue>
    </source>
</reference>
<reference key="8">
    <citation type="journal article" date="1999" name="Nature">
        <title>The DNA sequence of human chromosome 22.</title>
        <authorList>
            <person name="Dunham I."/>
            <person name="Hunt A.R."/>
            <person name="Collins J.E."/>
            <person name="Bruskiewich R."/>
            <person name="Beare D.M."/>
            <person name="Clamp M."/>
            <person name="Smink L.J."/>
            <person name="Ainscough R."/>
            <person name="Almeida J.P."/>
            <person name="Babbage A.K."/>
            <person name="Bagguley C."/>
            <person name="Bailey J."/>
            <person name="Barlow K.F."/>
            <person name="Bates K.N."/>
            <person name="Beasley O.P."/>
            <person name="Bird C.P."/>
            <person name="Blakey S.E."/>
            <person name="Bridgeman A.M."/>
            <person name="Buck D."/>
            <person name="Burgess J."/>
            <person name="Burrill W.D."/>
            <person name="Burton J."/>
            <person name="Carder C."/>
            <person name="Carter N.P."/>
            <person name="Chen Y."/>
            <person name="Clark G."/>
            <person name="Clegg S.M."/>
            <person name="Cobley V.E."/>
            <person name="Cole C.G."/>
            <person name="Collier R.E."/>
            <person name="Connor R."/>
            <person name="Conroy D."/>
            <person name="Corby N.R."/>
            <person name="Coville G.J."/>
            <person name="Cox A.V."/>
            <person name="Davis J."/>
            <person name="Dawson E."/>
            <person name="Dhami P.D."/>
            <person name="Dockree C."/>
            <person name="Dodsworth S.J."/>
            <person name="Durbin R.M."/>
            <person name="Ellington A.G."/>
            <person name="Evans K.L."/>
            <person name="Fey J.M."/>
            <person name="Fleming K."/>
            <person name="French L."/>
            <person name="Garner A.A."/>
            <person name="Gilbert J.G.R."/>
            <person name="Goward M.E."/>
            <person name="Grafham D.V."/>
            <person name="Griffiths M.N.D."/>
            <person name="Hall C."/>
            <person name="Hall R.E."/>
            <person name="Hall-Tamlyn G."/>
            <person name="Heathcott R.W."/>
            <person name="Ho S."/>
            <person name="Holmes S."/>
            <person name="Hunt S.E."/>
            <person name="Jones M.C."/>
            <person name="Kershaw J."/>
            <person name="Kimberley A.M."/>
            <person name="King A."/>
            <person name="Laird G.K."/>
            <person name="Langford C.F."/>
            <person name="Leversha M.A."/>
            <person name="Lloyd C."/>
            <person name="Lloyd D.M."/>
            <person name="Martyn I.D."/>
            <person name="Mashreghi-Mohammadi M."/>
            <person name="Matthews L.H."/>
            <person name="Mccann O.T."/>
            <person name="Mcclay J."/>
            <person name="Mclaren S."/>
            <person name="McMurray A.A."/>
            <person name="Milne S.A."/>
            <person name="Mortimore B.J."/>
            <person name="Odell C.N."/>
            <person name="Pavitt R."/>
            <person name="Pearce A.V."/>
            <person name="Pearson D."/>
            <person name="Phillimore B.J.C.T."/>
            <person name="Phillips S.H."/>
            <person name="Plumb R.W."/>
            <person name="Ramsay H."/>
            <person name="Ramsey Y."/>
            <person name="Rogers L."/>
            <person name="Ross M.T."/>
            <person name="Scott C.E."/>
            <person name="Sehra H.K."/>
            <person name="Skuce C.D."/>
            <person name="Smalley S."/>
            <person name="Smith M.L."/>
            <person name="Soderlund C."/>
            <person name="Spragon L."/>
            <person name="Steward C.A."/>
            <person name="Sulston J.E."/>
            <person name="Swann R.M."/>
            <person name="Vaudin M."/>
            <person name="Wall M."/>
            <person name="Wallis J.M."/>
            <person name="Whiteley M.N."/>
            <person name="Willey D.L."/>
            <person name="Williams L."/>
            <person name="Williams S.A."/>
            <person name="Williamson H."/>
            <person name="Wilmer T.E."/>
            <person name="Wilming L."/>
            <person name="Wright C.L."/>
            <person name="Hubbard T."/>
            <person name="Bentley D.R."/>
            <person name="Beck S."/>
            <person name="Rogers J."/>
            <person name="Shimizu N."/>
            <person name="Minoshima S."/>
            <person name="Kawasaki K."/>
            <person name="Sasaki T."/>
            <person name="Asakawa S."/>
            <person name="Kudoh J."/>
            <person name="Shintani A."/>
            <person name="Shibuya K."/>
            <person name="Yoshizaki Y."/>
            <person name="Aoki N."/>
            <person name="Mitsuyama S."/>
            <person name="Roe B.A."/>
            <person name="Chen F."/>
            <person name="Chu L."/>
            <person name="Crabtree J."/>
            <person name="Deschamps S."/>
            <person name="Do A."/>
            <person name="Do T."/>
            <person name="Dorman A."/>
            <person name="Fang F."/>
            <person name="Fu Y."/>
            <person name="Hu P."/>
            <person name="Hua A."/>
            <person name="Kenton S."/>
            <person name="Lai H."/>
            <person name="Lao H.I."/>
            <person name="Lewis J."/>
            <person name="Lewis S."/>
            <person name="Lin S.-P."/>
            <person name="Loh P."/>
            <person name="Malaj E."/>
            <person name="Nguyen T."/>
            <person name="Pan H."/>
            <person name="Phan S."/>
            <person name="Qi S."/>
            <person name="Qian Y."/>
            <person name="Ray L."/>
            <person name="Ren Q."/>
            <person name="Shaull S."/>
            <person name="Sloan D."/>
            <person name="Song L."/>
            <person name="Wang Q."/>
            <person name="Wang Y."/>
            <person name="Wang Z."/>
            <person name="White J."/>
            <person name="Willingham D."/>
            <person name="Wu H."/>
            <person name="Yao Z."/>
            <person name="Zhan M."/>
            <person name="Zhang G."/>
            <person name="Chissoe S."/>
            <person name="Murray J."/>
            <person name="Miller N."/>
            <person name="Minx P."/>
            <person name="Fulton R."/>
            <person name="Johnson D."/>
            <person name="Bemis G."/>
            <person name="Bentley D."/>
            <person name="Bradshaw H."/>
            <person name="Bourne S."/>
            <person name="Cordes M."/>
            <person name="Du Z."/>
            <person name="Fulton L."/>
            <person name="Goela D."/>
            <person name="Graves T."/>
            <person name="Hawkins J."/>
            <person name="Hinds K."/>
            <person name="Kemp K."/>
            <person name="Latreille P."/>
            <person name="Layman D."/>
            <person name="Ozersky P."/>
            <person name="Rohlfing T."/>
            <person name="Scheet P."/>
            <person name="Walker C."/>
            <person name="Wamsley A."/>
            <person name="Wohldmann P."/>
            <person name="Pepin K."/>
            <person name="Nelson J."/>
            <person name="Korf I."/>
            <person name="Bedell J.A."/>
            <person name="Hillier L.W."/>
            <person name="Mardis E."/>
            <person name="Waterston R."/>
            <person name="Wilson R."/>
            <person name="Emanuel B.S."/>
            <person name="Shaikh T."/>
            <person name="Kurahashi H."/>
            <person name="Saitta S."/>
            <person name="Budarf M.L."/>
            <person name="McDermid H.E."/>
            <person name="Johnson A."/>
            <person name="Wong A.C.C."/>
            <person name="Morrow B.E."/>
            <person name="Edelmann L."/>
            <person name="Kim U.J."/>
            <person name="Shizuya H."/>
            <person name="Simon M.I."/>
            <person name="Dumanski J.P."/>
            <person name="Peyrard M."/>
            <person name="Kedra D."/>
            <person name="Seroussi E."/>
            <person name="Fransson I."/>
            <person name="Tapia I."/>
            <person name="Bruder C.E."/>
            <person name="O'Brien K.P."/>
            <person name="Wilkinson P."/>
            <person name="Bodenteich A."/>
            <person name="Hartman K."/>
            <person name="Hu X."/>
            <person name="Khan A.S."/>
            <person name="Lane L."/>
            <person name="Tilahun Y."/>
            <person name="Wright H."/>
        </authorList>
    </citation>
    <scope>NUCLEOTIDE SEQUENCE [LARGE SCALE GENOMIC DNA]</scope>
</reference>
<reference key="9">
    <citation type="submission" date="2005-07" db="EMBL/GenBank/DDBJ databases">
        <authorList>
            <person name="Mural R.J."/>
            <person name="Istrail S."/>
            <person name="Sutton G."/>
            <person name="Florea L."/>
            <person name="Halpern A.L."/>
            <person name="Mobarry C.M."/>
            <person name="Lippert R."/>
            <person name="Walenz B."/>
            <person name="Shatkay H."/>
            <person name="Dew I."/>
            <person name="Miller J.R."/>
            <person name="Flanigan M.J."/>
            <person name="Edwards N.J."/>
            <person name="Bolanos R."/>
            <person name="Fasulo D."/>
            <person name="Halldorsson B.V."/>
            <person name="Hannenhalli S."/>
            <person name="Turner R."/>
            <person name="Yooseph S."/>
            <person name="Lu F."/>
            <person name="Nusskern D.R."/>
            <person name="Shue B.C."/>
            <person name="Zheng X.H."/>
            <person name="Zhong F."/>
            <person name="Delcher A.L."/>
            <person name="Huson D.H."/>
            <person name="Kravitz S.A."/>
            <person name="Mouchard L."/>
            <person name="Reinert K."/>
            <person name="Remington K.A."/>
            <person name="Clark A.G."/>
            <person name="Waterman M.S."/>
            <person name="Eichler E.E."/>
            <person name="Adams M.D."/>
            <person name="Hunkapiller M.W."/>
            <person name="Myers E.W."/>
            <person name="Venter J.C."/>
        </authorList>
    </citation>
    <scope>NUCLEOTIDE SEQUENCE [LARGE SCALE GENOMIC DNA]</scope>
</reference>
<reference key="10">
    <citation type="journal article" date="2004" name="Genome Res.">
        <title>The status, quality, and expansion of the NIH full-length cDNA project: the Mammalian Gene Collection (MGC).</title>
        <authorList>
            <consortium name="The MGC Project Team"/>
        </authorList>
    </citation>
    <scope>NUCLEOTIDE SEQUENCE [LARGE SCALE MRNA] (ISOFORM 1)</scope>
    <source>
        <tissue>Brain</tissue>
        <tissue>Pancreas</tissue>
    </source>
</reference>
<reference key="11">
    <citation type="journal article" date="2003" name="Nat. Biotechnol.">
        <title>Exploring proteomes and analyzing protein processing by mass spectrometric identification of sorted N-terminal peptides.</title>
        <authorList>
            <person name="Gevaert K."/>
            <person name="Goethals M."/>
            <person name="Martens L."/>
            <person name="Van Damme J."/>
            <person name="Staes A."/>
            <person name="Thomas G.R."/>
            <person name="Vandekerckhove J."/>
        </authorList>
    </citation>
    <scope>PROTEIN SEQUENCE OF 2-22</scope>
    <source>
        <tissue>Platelet</tissue>
    </source>
</reference>
<reference key="12">
    <citation type="journal article" date="1992" name="Electrophoresis">
        <title>Human liver protein map: a reference database established by microsequencing and gel comparison.</title>
        <authorList>
            <person name="Hochstrasser D.F."/>
            <person name="Frutiger S."/>
            <person name="Paquet N."/>
            <person name="Bairoch A."/>
            <person name="Ravier F."/>
            <person name="Pasquali C."/>
            <person name="Sanchez J.-C."/>
            <person name="Tissot J.-D."/>
            <person name="Bjellqvist B."/>
            <person name="Vargas R."/>
            <person name="Appel R.D."/>
            <person name="Hughes G.J."/>
        </authorList>
    </citation>
    <scope>PROTEIN SEQUENCE OF 2-12</scope>
    <source>
        <tissue>Liver</tissue>
    </source>
</reference>
<reference key="13">
    <citation type="journal article" date="1993" name="Biochem. Biophys. Res. Commun.">
        <title>Isolation of a new tautomerase monitored by the conversion of D-dopachrome to 5,6-dihydroxyindole.</title>
        <authorList>
            <person name="Odh G."/>
            <person name="Hindemith A."/>
            <person name="Rosengren A.-M."/>
            <person name="Rosengren E."/>
            <person name="Rorsman H."/>
        </authorList>
    </citation>
    <scope>FUNCTION</scope>
    <scope>CATALYTIC ACTIVITY</scope>
    <scope>SUBCELLULAR LOCATION</scope>
    <scope>TISSUE SPECIFICITY</scope>
</reference>
<reference key="14">
    <citation type="journal article" date="2011" name="BMC Syst. Biol.">
        <title>Initial characterization of the human central proteome.</title>
        <authorList>
            <person name="Burkard T.R."/>
            <person name="Planyavsky M."/>
            <person name="Kaupe I."/>
            <person name="Breitwieser F.P."/>
            <person name="Buerckstuemmer T."/>
            <person name="Bennett K.L."/>
            <person name="Superti-Furga G."/>
            <person name="Colinge J."/>
        </authorList>
    </citation>
    <scope>IDENTIFICATION BY MASS SPECTROMETRY [LARGE SCALE ANALYSIS]</scope>
</reference>
<reference key="15">
    <citation type="journal article" date="1999" name="Biochemistry">
        <title>Crystal structure of human D-dopachrome tautomerase, a homologue of macrophage migration inhibitory factor, at 1.54-A resolution.</title>
        <authorList>
            <person name="Sugimoto H."/>
            <person name="Taniguchi M."/>
            <person name="Nakagawa A."/>
            <person name="Tanaka I."/>
            <person name="Suzuki M."/>
            <person name="Nishihira J."/>
        </authorList>
    </citation>
    <scope>X-RAY CRYSTALLOGRAPHY (1.54 ANGSTROMS)</scope>
    <scope>SUBUNIT</scope>
</reference>
<accession>P30046</accession>
<accession>B7Z522</accession>
<accession>O00774</accession>
<accession>O60787</accession>
<accession>Q13534</accession>
<evidence type="ECO:0000250" key="1">
    <source>
        <dbReference type="UniProtKB" id="O35215"/>
    </source>
</evidence>
<evidence type="ECO:0000269" key="2">
    <source>
    </source>
</evidence>
<evidence type="ECO:0000269" key="3">
    <source>
    </source>
</evidence>
<evidence type="ECO:0000269" key="4">
    <source>
    </source>
</evidence>
<evidence type="ECO:0000269" key="5">
    <source>
    </source>
</evidence>
<evidence type="ECO:0000269" key="6">
    <source>
    </source>
</evidence>
<evidence type="ECO:0000269" key="7">
    <source ref="1"/>
</evidence>
<evidence type="ECO:0000303" key="8">
    <source>
    </source>
</evidence>
<evidence type="ECO:0000305" key="9"/>
<evidence type="ECO:0000305" key="10">
    <source>
    </source>
</evidence>
<evidence type="ECO:0000305" key="11">
    <source>
    </source>
</evidence>
<evidence type="ECO:0007829" key="12">
    <source>
        <dbReference type="PDB" id="7MRU"/>
    </source>
</evidence>
<evidence type="ECO:0007829" key="13">
    <source>
        <dbReference type="PDB" id="7MW7"/>
    </source>
</evidence>
<sequence length="118" mass="12712">MPFLELDTNLPANRVPAGLEKRLCAAAASILGKPADRVNVTVRPGLAMALSGSTEPCAQLSISSIGVVGTAEDNRSHSAHFFEFLTKELALGQDRILIRFFPLESWQIGKIGTVMTFL</sequence>
<comment type="function">
    <text evidence="5 6">Tautomerization of D-dopachrome with decarboxylation to give 5,6-dihydroxyindole (DHI).</text>
</comment>
<comment type="catalytic activity">
    <reaction evidence="5 6">
        <text>D-dopachrome + H(+) = 5,6-dihydroxyindole + CO2</text>
        <dbReference type="Rhea" id="RHEA:18441"/>
        <dbReference type="ChEBI" id="CHEBI:15378"/>
        <dbReference type="ChEBI" id="CHEBI:16526"/>
        <dbReference type="ChEBI" id="CHEBI:27404"/>
        <dbReference type="ChEBI" id="CHEBI:58782"/>
        <dbReference type="EC" id="4.1.1.84"/>
    </reaction>
    <physiologicalReaction direction="left-to-right" evidence="11">
        <dbReference type="Rhea" id="RHEA:18442"/>
    </physiologicalReaction>
</comment>
<comment type="biophysicochemical properties">
    <kinetics>
        <KM evidence="6">0.42 mM for D-dopachrome</KM>
        <Vmax evidence="6">100.0 umol/min/mg enzyme for D-dopachrome</Vmax>
    </kinetics>
</comment>
<comment type="subunit">
    <text evidence="2">Homotrimer.</text>
</comment>
<comment type="subcellular location">
    <subcellularLocation>
        <location evidence="10">Cytoplasm</location>
    </subcellularLocation>
</comment>
<comment type="alternative products">
    <event type="alternative splicing"/>
    <isoform>
        <id>P30046-1</id>
        <name>1</name>
        <sequence type="displayed"/>
    </isoform>
    <isoform>
        <id>P30046-2</id>
        <name>2</name>
        <sequence type="described" ref="VSP_056953"/>
    </isoform>
</comment>
<comment type="tissue specificity">
    <text evidence="5 6">Highly expressed in the liver and at lower levels in the heart, lung and pancreas.</text>
</comment>
<comment type="similarity">
    <text evidence="9">Belongs to the MIF family.</text>
</comment>
<gene>
    <name type="primary">DDT</name>
</gene>
<protein>
    <recommendedName>
        <fullName>D-dopachrome decarboxylase</fullName>
        <ecNumber evidence="5 6">4.1.1.84</ecNumber>
    </recommendedName>
    <alternativeName>
        <fullName>D-dopachrome tautomerase</fullName>
    </alternativeName>
    <alternativeName>
        <fullName>Phenylpyruvate tautomerase II</fullName>
    </alternativeName>
</protein>
<keyword id="KW-0002">3D-structure</keyword>
<keyword id="KW-0007">Acetylation</keyword>
<keyword id="KW-0025">Alternative splicing</keyword>
<keyword id="KW-0963">Cytoplasm</keyword>
<keyword id="KW-0903">Direct protein sequencing</keyword>
<keyword id="KW-0456">Lyase</keyword>
<keyword id="KW-0470">Melanin biosynthesis</keyword>
<keyword id="KW-1267">Proteomics identification</keyword>
<keyword id="KW-1185">Reference proteome</keyword>
<name>DOPD_HUMAN</name>
<proteinExistence type="evidence at protein level"/>
<dbReference type="EC" id="4.1.1.84" evidence="5 6"/>
<dbReference type="EMBL" id="U49785">
    <property type="protein sequence ID" value="AAB48546.1"/>
    <property type="molecule type" value="mRNA"/>
</dbReference>
<dbReference type="EMBL" id="U84143">
    <property type="protein sequence ID" value="AAB41503.1"/>
    <property type="molecule type" value="mRNA"/>
</dbReference>
<dbReference type="EMBL" id="Y11151">
    <property type="protein sequence ID" value="CAA72037.1"/>
    <property type="molecule type" value="Genomic_DNA"/>
</dbReference>
<dbReference type="EMBL" id="AF012434">
    <property type="protein sequence ID" value="AAC77468.1"/>
    <property type="molecule type" value="Genomic_DNA"/>
</dbReference>
<dbReference type="EMBL" id="AF012432">
    <property type="protein sequence ID" value="AAC77468.1"/>
    <property type="status" value="JOINED"/>
    <property type="molecule type" value="Genomic_DNA"/>
</dbReference>
<dbReference type="EMBL" id="AF012433">
    <property type="protein sequence ID" value="AAC77468.1"/>
    <property type="status" value="JOINED"/>
    <property type="molecule type" value="Genomic_DNA"/>
</dbReference>
<dbReference type="EMBL" id="AF058293">
    <property type="protein sequence ID" value="AAC13717.1"/>
    <property type="molecule type" value="Genomic_DNA"/>
</dbReference>
<dbReference type="EMBL" id="CR456431">
    <property type="protein sequence ID" value="CAG30317.1"/>
    <property type="molecule type" value="mRNA"/>
</dbReference>
<dbReference type="EMBL" id="AK298326">
    <property type="protein sequence ID" value="BAH12758.1"/>
    <property type="molecule type" value="mRNA"/>
</dbReference>
<dbReference type="EMBL" id="AP000351">
    <property type="status" value="NOT_ANNOTATED_CDS"/>
    <property type="molecule type" value="Genomic_DNA"/>
</dbReference>
<dbReference type="EMBL" id="Z84718">
    <property type="status" value="NOT_ANNOTATED_CDS"/>
    <property type="molecule type" value="Genomic_DNA"/>
</dbReference>
<dbReference type="EMBL" id="CH471095">
    <property type="protein sequence ID" value="EAW59622.1"/>
    <property type="molecule type" value="Genomic_DNA"/>
</dbReference>
<dbReference type="EMBL" id="BC005971">
    <property type="protein sequence ID" value="AAH05971.1"/>
    <property type="molecule type" value="mRNA"/>
</dbReference>
<dbReference type="EMBL" id="BC015508">
    <property type="protein sequence ID" value="AAH15508.1"/>
    <property type="molecule type" value="mRNA"/>
</dbReference>
<dbReference type="CCDS" id="CCDS13820.1">
    <molecule id="P30046-1"/>
</dbReference>
<dbReference type="PIR" id="G02438">
    <property type="entry name" value="G02438"/>
</dbReference>
<dbReference type="PIR" id="JE0162">
    <property type="entry name" value="JE0162"/>
</dbReference>
<dbReference type="RefSeq" id="NP_001077861.1">
    <molecule id="P30046-1"/>
    <property type="nucleotide sequence ID" value="NM_001084392.3"/>
</dbReference>
<dbReference type="RefSeq" id="NP_001346.1">
    <molecule id="P30046-1"/>
    <property type="nucleotide sequence ID" value="NM_001355.4"/>
</dbReference>
<dbReference type="RefSeq" id="NP_001384414.1">
    <molecule id="P30046-1"/>
    <property type="nucleotide sequence ID" value="NM_001397485.1"/>
</dbReference>
<dbReference type="PDB" id="1DPT">
    <property type="method" value="X-ray"/>
    <property type="resolution" value="1.54 A"/>
    <property type="chains" value="A/B/C=2-118"/>
</dbReference>
<dbReference type="PDB" id="3KAN">
    <property type="method" value="X-ray"/>
    <property type="resolution" value="1.13 A"/>
    <property type="chains" value="A/B/C=2-118"/>
</dbReference>
<dbReference type="PDB" id="4Q3F">
    <property type="method" value="X-ray"/>
    <property type="resolution" value="1.80 A"/>
    <property type="chains" value="A/B/C=2-118"/>
</dbReference>
<dbReference type="PDB" id="6C5F">
    <property type="method" value="X-ray"/>
    <property type="resolution" value="1.40 A"/>
    <property type="chains" value="A/B/C=2-118"/>
</dbReference>
<dbReference type="PDB" id="7MRU">
    <property type="method" value="X-ray"/>
    <property type="resolution" value="1.33 A"/>
    <property type="chains" value="A/B/C=2-118"/>
</dbReference>
<dbReference type="PDB" id="7MRV">
    <property type="method" value="X-ray"/>
    <property type="resolution" value="1.57 A"/>
    <property type="chains" value="A=2-118"/>
</dbReference>
<dbReference type="PDB" id="7MSE">
    <property type="method" value="X-ray"/>
    <property type="resolution" value="1.27 A"/>
    <property type="chains" value="A/B/C=2-118"/>
</dbReference>
<dbReference type="PDB" id="7MW7">
    <property type="method" value="X-ray"/>
    <property type="resolution" value="1.10 A"/>
    <property type="chains" value="A=1-118"/>
</dbReference>
<dbReference type="PDB" id="8DBB">
    <property type="method" value="X-ray"/>
    <property type="resolution" value="1.30 A"/>
    <property type="chains" value="A/B/C=1-118"/>
</dbReference>
<dbReference type="PDB" id="8VDY">
    <property type="method" value="X-ray"/>
    <property type="resolution" value="2.44 A"/>
    <property type="chains" value="A/B/C/D/E/F/G/H/I/J/K/L=2-114"/>
</dbReference>
<dbReference type="PDB" id="8VFK">
    <property type="method" value="X-ray"/>
    <property type="resolution" value="1.59 A"/>
    <property type="chains" value="A/B/C=2-109"/>
</dbReference>
<dbReference type="PDB" id="8VFL">
    <property type="method" value="X-ray"/>
    <property type="resolution" value="1.23 A"/>
    <property type="chains" value="A/B/C=2-118"/>
</dbReference>
<dbReference type="PDB" id="8VFN">
    <property type="method" value="X-ray"/>
    <property type="resolution" value="1.29 A"/>
    <property type="chains" value="A/B/C=2-118"/>
</dbReference>
<dbReference type="PDB" id="8VFO">
    <property type="method" value="X-ray"/>
    <property type="resolution" value="1.35 A"/>
    <property type="chains" value="A=2-118"/>
</dbReference>
<dbReference type="PDB" id="8VFW">
    <property type="method" value="X-ray"/>
    <property type="resolution" value="1.31 A"/>
    <property type="chains" value="A/B/C/D=2-118"/>
</dbReference>
<dbReference type="PDB" id="8VG5">
    <property type="method" value="X-ray"/>
    <property type="resolution" value="1.50 A"/>
    <property type="chains" value="A/B/C/D=2-118"/>
</dbReference>
<dbReference type="PDB" id="8VG7">
    <property type="method" value="X-ray"/>
    <property type="resolution" value="1.24 A"/>
    <property type="chains" value="A=2-118"/>
</dbReference>
<dbReference type="PDB" id="8VG8">
    <property type="method" value="X-ray"/>
    <property type="resolution" value="1.33 A"/>
    <property type="chains" value="A=2-118"/>
</dbReference>
<dbReference type="PDB" id="9BB0">
    <property type="method" value="X-ray"/>
    <property type="resolution" value="0.98 A"/>
    <property type="chains" value="AAA/BBB/CCC=2-118"/>
</dbReference>
<dbReference type="PDBsum" id="1DPT"/>
<dbReference type="PDBsum" id="3KAN"/>
<dbReference type="PDBsum" id="4Q3F"/>
<dbReference type="PDBsum" id="6C5F"/>
<dbReference type="PDBsum" id="7MRU"/>
<dbReference type="PDBsum" id="7MRV"/>
<dbReference type="PDBsum" id="7MSE"/>
<dbReference type="PDBsum" id="7MW7"/>
<dbReference type="PDBsum" id="8DBB"/>
<dbReference type="PDBsum" id="8VDY"/>
<dbReference type="PDBsum" id="8VFK"/>
<dbReference type="PDBsum" id="8VFL"/>
<dbReference type="PDBsum" id="8VFN"/>
<dbReference type="PDBsum" id="8VFO"/>
<dbReference type="PDBsum" id="8VFW"/>
<dbReference type="PDBsum" id="8VG5"/>
<dbReference type="PDBsum" id="8VG7"/>
<dbReference type="PDBsum" id="8VG8"/>
<dbReference type="PDBsum" id="9BB0"/>
<dbReference type="SMR" id="P30046"/>
<dbReference type="BioGRID" id="108018">
    <property type="interactions" value="15"/>
</dbReference>
<dbReference type="BioGRID" id="755774">
    <property type="interactions" value="17"/>
</dbReference>
<dbReference type="FunCoup" id="P30046">
    <property type="interactions" value="67"/>
</dbReference>
<dbReference type="IntAct" id="P30046">
    <property type="interactions" value="5"/>
</dbReference>
<dbReference type="STRING" id="9606.ENSP00000381386"/>
<dbReference type="GlyGen" id="P30046">
    <property type="glycosylation" value="1 site"/>
</dbReference>
<dbReference type="iPTMnet" id="P30046"/>
<dbReference type="PhosphoSitePlus" id="P30046"/>
<dbReference type="SwissPalm" id="P30046"/>
<dbReference type="BioMuta" id="DDT"/>
<dbReference type="DMDM" id="2828192"/>
<dbReference type="jPOST" id="P30046"/>
<dbReference type="MassIVE" id="P30046"/>
<dbReference type="PaxDb" id="9606-ENSP00000381386"/>
<dbReference type="PeptideAtlas" id="P30046"/>
<dbReference type="ProteomicsDB" id="54626">
    <molecule id="P30046-1"/>
</dbReference>
<dbReference type="ProteomicsDB" id="6653"/>
<dbReference type="Pumba" id="P30046"/>
<dbReference type="TopDownProteomics" id="P30046-1">
    <molecule id="P30046-1"/>
</dbReference>
<dbReference type="Antibodypedia" id="35176">
    <property type="antibodies" value="401 antibodies from 29 providers"/>
</dbReference>
<dbReference type="DNASU" id="1652"/>
<dbReference type="Ensembl" id="ENST00000350608.7">
    <molecule id="P30046-1"/>
    <property type="protein sequence ID" value="ENSP00000215773.4"/>
    <property type="gene ID" value="ENSG00000099977.16"/>
</dbReference>
<dbReference type="Ensembl" id="ENST00000398344.9">
    <molecule id="P30046-1"/>
    <property type="protein sequence ID" value="ENSP00000381386.4"/>
    <property type="gene ID" value="ENSG00000099977.16"/>
</dbReference>
<dbReference type="Ensembl" id="ENST00000430101.2">
    <molecule id="P30046-2"/>
    <property type="protein sequence ID" value="ENSP00000399768.2"/>
    <property type="gene ID" value="ENSG00000099977.16"/>
</dbReference>
<dbReference type="Ensembl" id="ENST00000615721.3">
    <molecule id="P30046-1"/>
    <property type="protein sequence ID" value="ENSP00000481175.1"/>
    <property type="gene ID" value="ENSG00000275003.3"/>
</dbReference>
<dbReference type="Ensembl" id="ENST00000626871.2">
    <molecule id="P30046-1"/>
    <property type="protein sequence ID" value="ENSP00000486829.1"/>
    <property type="gene ID" value="ENSG00000275003.3"/>
</dbReference>
<dbReference type="Ensembl" id="ENST00000629401.2">
    <molecule id="P30046-2"/>
    <property type="protein sequence ID" value="ENSP00000486384.1"/>
    <property type="gene ID" value="ENSG00000275003.3"/>
</dbReference>
<dbReference type="GeneID" id="1652"/>
<dbReference type="KEGG" id="hsa:1652"/>
<dbReference type="MANE-Select" id="ENST00000398344.9">
    <property type="protein sequence ID" value="ENSP00000381386.4"/>
    <property type="RefSeq nucleotide sequence ID" value="NM_001084392.3"/>
    <property type="RefSeq protein sequence ID" value="NP_001077861.1"/>
</dbReference>
<dbReference type="UCSC" id="uc062cik.1">
    <molecule id="P30046-1"/>
    <property type="organism name" value="human"/>
</dbReference>
<dbReference type="AGR" id="HGNC:2732"/>
<dbReference type="CTD" id="1652"/>
<dbReference type="DisGeNET" id="1652"/>
<dbReference type="GeneCards" id="DDT"/>
<dbReference type="HGNC" id="HGNC:2732">
    <property type="gene designation" value="DDT"/>
</dbReference>
<dbReference type="HPA" id="ENSG00000099977">
    <property type="expression patterns" value="Tissue enhanced (liver)"/>
</dbReference>
<dbReference type="MIM" id="602750">
    <property type="type" value="gene"/>
</dbReference>
<dbReference type="neXtProt" id="NX_P30046"/>
<dbReference type="OpenTargets" id="ENSG00000099977"/>
<dbReference type="PharmGKB" id="PA27197"/>
<dbReference type="VEuPathDB" id="HostDB:ENSG00000099977"/>
<dbReference type="eggNOG" id="KOG1759">
    <property type="taxonomic scope" value="Eukaryota"/>
</dbReference>
<dbReference type="GeneTree" id="ENSGT00940000156821"/>
<dbReference type="HOGENOM" id="CLU_129906_2_0_1"/>
<dbReference type="InParanoid" id="P30046"/>
<dbReference type="PAN-GO" id="P30046">
    <property type="GO annotations" value="2 GO annotations based on evolutionary models"/>
</dbReference>
<dbReference type="PhylomeDB" id="P30046"/>
<dbReference type="TreeFam" id="TF313853"/>
<dbReference type="BRENDA" id="4.1.1.84">
    <property type="organism ID" value="2681"/>
</dbReference>
<dbReference type="PathwayCommons" id="P30046"/>
<dbReference type="SignaLink" id="P30046"/>
<dbReference type="BioGRID-ORCS" id="1652">
    <property type="hits" value="16 hits in 724 CRISPR screens"/>
</dbReference>
<dbReference type="ChiTaRS" id="DDT">
    <property type="organism name" value="human"/>
</dbReference>
<dbReference type="EvolutionaryTrace" id="P30046"/>
<dbReference type="GeneWiki" id="DDT_(gene)"/>
<dbReference type="GenomeRNAi" id="1652"/>
<dbReference type="Pharos" id="P30046">
    <property type="development level" value="Tbio"/>
</dbReference>
<dbReference type="PRO" id="PR:P30046"/>
<dbReference type="Proteomes" id="UP000005640">
    <property type="component" value="Chromosome 22"/>
</dbReference>
<dbReference type="RNAct" id="P30046">
    <property type="molecule type" value="protein"/>
</dbReference>
<dbReference type="Bgee" id="ENSG00000099977">
    <property type="expression patterns" value="Expressed in right lobe of liver and 97 other cell types or tissues"/>
</dbReference>
<dbReference type="ExpressionAtlas" id="P30046">
    <property type="expression patterns" value="baseline and differential"/>
</dbReference>
<dbReference type="GO" id="GO:0005737">
    <property type="term" value="C:cytoplasm"/>
    <property type="evidence" value="ECO:0000304"/>
    <property type="project" value="UniProtKB"/>
</dbReference>
<dbReference type="GO" id="GO:0070062">
    <property type="term" value="C:extracellular exosome"/>
    <property type="evidence" value="ECO:0007005"/>
    <property type="project" value="UniProtKB"/>
</dbReference>
<dbReference type="GO" id="GO:0005615">
    <property type="term" value="C:extracellular space"/>
    <property type="evidence" value="ECO:0000314"/>
    <property type="project" value="BHF-UCL"/>
</dbReference>
<dbReference type="GO" id="GO:0005126">
    <property type="term" value="F:cytokine receptor binding"/>
    <property type="evidence" value="ECO:0000314"/>
    <property type="project" value="BHF-UCL"/>
</dbReference>
<dbReference type="GO" id="GO:0033981">
    <property type="term" value="F:D-dopachrome decarboxylase activity"/>
    <property type="evidence" value="ECO:0000314"/>
    <property type="project" value="UniProtKB"/>
</dbReference>
<dbReference type="GO" id="GO:0004167">
    <property type="term" value="F:dopachrome isomerase activity"/>
    <property type="evidence" value="ECO:0000304"/>
    <property type="project" value="ProtInc"/>
</dbReference>
<dbReference type="GO" id="GO:0050178">
    <property type="term" value="F:phenylpyruvate tautomerase activity"/>
    <property type="evidence" value="ECO:0000314"/>
    <property type="project" value="BHF-UCL"/>
</dbReference>
<dbReference type="GO" id="GO:0042438">
    <property type="term" value="P:melanin biosynthetic process"/>
    <property type="evidence" value="ECO:0007669"/>
    <property type="project" value="UniProtKB-KW"/>
</dbReference>
<dbReference type="GO" id="GO:0010760">
    <property type="term" value="P:negative regulation of macrophage chemotaxis"/>
    <property type="evidence" value="ECO:0000314"/>
    <property type="project" value="BHF-UCL"/>
</dbReference>
<dbReference type="GO" id="GO:0070374">
    <property type="term" value="P:positive regulation of ERK1 and ERK2 cascade"/>
    <property type="evidence" value="ECO:0000316"/>
    <property type="project" value="BHF-UCL"/>
</dbReference>
<dbReference type="GO" id="GO:0050729">
    <property type="term" value="P:positive regulation of inflammatory response"/>
    <property type="evidence" value="ECO:0000305"/>
    <property type="project" value="BHF-UCL"/>
</dbReference>
<dbReference type="GO" id="GO:0032760">
    <property type="term" value="P:positive regulation of tumor necrosis factor production"/>
    <property type="evidence" value="ECO:0000314"/>
    <property type="project" value="BHF-UCL"/>
</dbReference>
<dbReference type="FunFam" id="3.30.429.10:FF:000003">
    <property type="entry name" value="D-dopachrome decarboxylase"/>
    <property type="match status" value="1"/>
</dbReference>
<dbReference type="Gene3D" id="3.30.429.10">
    <property type="entry name" value="Macrophage Migration Inhibitory Factor"/>
    <property type="match status" value="1"/>
</dbReference>
<dbReference type="InterPro" id="IPR001398">
    <property type="entry name" value="Macrophage_inhib_fac"/>
</dbReference>
<dbReference type="InterPro" id="IPR019829">
    <property type="entry name" value="Macrophage_inhib_fac_CS"/>
</dbReference>
<dbReference type="InterPro" id="IPR014347">
    <property type="entry name" value="Tautomerase/MIF_sf"/>
</dbReference>
<dbReference type="PANTHER" id="PTHR11954">
    <property type="entry name" value="D-DOPACHROME DECARBOXYLASE"/>
    <property type="match status" value="1"/>
</dbReference>
<dbReference type="PANTHER" id="PTHR11954:SF22">
    <property type="entry name" value="D-DOPACHROME DECARBOXYLASE"/>
    <property type="match status" value="1"/>
</dbReference>
<dbReference type="Pfam" id="PF01187">
    <property type="entry name" value="MIF"/>
    <property type="match status" value="1"/>
</dbReference>
<dbReference type="SUPFAM" id="SSF55331">
    <property type="entry name" value="Tautomerase/MIF"/>
    <property type="match status" value="1"/>
</dbReference>
<dbReference type="PROSITE" id="PS01158">
    <property type="entry name" value="MIF"/>
    <property type="match status" value="1"/>
</dbReference>